<feature type="chain" id="PRO_0000361542" description="Vacuolar protein sorting-associated protein 51 homolog">
    <location>
        <begin position="1"/>
        <end position="760"/>
    </location>
</feature>
<feature type="coiled-coil region" evidence="2">
    <location>
        <begin position="97"/>
        <end position="127"/>
    </location>
</feature>
<feature type="coiled-coil region" evidence="2">
    <location>
        <begin position="374"/>
        <end position="395"/>
    </location>
</feature>
<protein>
    <recommendedName>
        <fullName>Vacuolar protein sorting-associated protein 51 homolog</fullName>
    </recommendedName>
    <alternativeName>
        <fullName>Protein fat-free homolog</fullName>
    </alternativeName>
</protein>
<dbReference type="EMBL" id="BC096636">
    <property type="protein sequence ID" value="AAH96636.1"/>
    <property type="molecule type" value="mRNA"/>
</dbReference>
<dbReference type="RefSeq" id="NP_001027521.1">
    <property type="nucleotide sequence ID" value="NM_001032350.1"/>
</dbReference>
<dbReference type="SMR" id="Q4V9Y0"/>
<dbReference type="FunCoup" id="Q4V9Y0">
    <property type="interactions" value="2416"/>
</dbReference>
<dbReference type="STRING" id="8364.ENSXETP00000018173"/>
<dbReference type="PaxDb" id="8364-ENSXETP00000003451"/>
<dbReference type="DNASU" id="613113"/>
<dbReference type="GeneID" id="613113"/>
<dbReference type="KEGG" id="xtr:613113"/>
<dbReference type="AGR" id="Xenbase:XB-GENE-1005391"/>
<dbReference type="CTD" id="738"/>
<dbReference type="Xenbase" id="XB-GENE-1005391">
    <property type="gene designation" value="vps51"/>
</dbReference>
<dbReference type="eggNOG" id="KOG2346">
    <property type="taxonomic scope" value="Eukaryota"/>
</dbReference>
<dbReference type="InParanoid" id="Q4V9Y0"/>
<dbReference type="OMA" id="DIICERG"/>
<dbReference type="OrthoDB" id="203678at2759"/>
<dbReference type="Proteomes" id="UP000008143">
    <property type="component" value="Chromosome 4"/>
</dbReference>
<dbReference type="GO" id="GO:1990745">
    <property type="term" value="C:EARP complex"/>
    <property type="evidence" value="ECO:0000250"/>
    <property type="project" value="UniProtKB"/>
</dbReference>
<dbReference type="GO" id="GO:0000938">
    <property type="term" value="C:GARP complex"/>
    <property type="evidence" value="ECO:0000250"/>
    <property type="project" value="UniProtKB"/>
</dbReference>
<dbReference type="GO" id="GO:0055037">
    <property type="term" value="C:recycling endosome"/>
    <property type="evidence" value="ECO:0000250"/>
    <property type="project" value="UniProtKB"/>
</dbReference>
<dbReference type="GO" id="GO:0032456">
    <property type="term" value="P:endocytic recycling"/>
    <property type="evidence" value="ECO:0000250"/>
    <property type="project" value="UniProtKB"/>
</dbReference>
<dbReference type="GO" id="GO:0006869">
    <property type="term" value="P:lipid transport"/>
    <property type="evidence" value="ECO:0007669"/>
    <property type="project" value="UniProtKB-KW"/>
</dbReference>
<dbReference type="GO" id="GO:0015031">
    <property type="term" value="P:protein transport"/>
    <property type="evidence" value="ECO:0007669"/>
    <property type="project" value="UniProtKB-KW"/>
</dbReference>
<dbReference type="InterPro" id="IPR016159">
    <property type="entry name" value="Cullin_repeat-like_dom_sf"/>
</dbReference>
<dbReference type="InterPro" id="IPR039481">
    <property type="entry name" value="EXOC2/Sec5_N_dom"/>
</dbReference>
<dbReference type="InterPro" id="IPR014812">
    <property type="entry name" value="Vps51"/>
</dbReference>
<dbReference type="PANTHER" id="PTHR15954">
    <property type="entry name" value="VACUOLAR PROTEIN SORTING-ASSOCIATED PROTEIN 51 HOMOLOG"/>
    <property type="match status" value="1"/>
</dbReference>
<dbReference type="PANTHER" id="PTHR15954:SF4">
    <property type="entry name" value="VACUOLAR PROTEIN SORTING-ASSOCIATED PROTEIN 51 HOMOLOG"/>
    <property type="match status" value="1"/>
</dbReference>
<dbReference type="Pfam" id="PF15469">
    <property type="entry name" value="Sec5"/>
    <property type="match status" value="1"/>
</dbReference>
<dbReference type="SUPFAM" id="SSF74788">
    <property type="entry name" value="Cullin repeat-like"/>
    <property type="match status" value="1"/>
</dbReference>
<sequence length="760" mass="85228">MATVSGTEEEENAKKRKAHGMLKLYYGMTEEGKACERHLEPTDVDGVHFNPELYLTKLRKESSLSQLMDVEADMVRQIRSLDSEMQTLVYENYNKFISATDTIRKMKNDFKKMEDEMDGLATNMAVITEFSARISSTLQERHQQITKLSGVHTLLRKLQFLFELPARLKKCIELGAYAQAVSYHSKARSVLHQYQHMPSFHGIQTDCQAIMAGLADTLRQRFRDPASSPQDLSECVEMLLNLEEPAHLLCDEFLAHGRGRLASHLSDLQESGDILEFVDRGCGGFISDACLLAASYQSLFSKEAGSTAQMAEAKLTSFLEELSTGYFELVEKRLRQEKSLGDNSLLVRALDRFHRRLQAPSKLVPGCGFNRRGTEIVVRAAQERLAQYLQALKDFFQGCLTDVRQALAAPRLPGKEMPALGDLLAGLSASVLNQIKTVLAAVHLFTAKDVAFSDKPYFKGEFCSQGVREGLIVAFIKSVCQTARQFCEIPGEKGTSTPPALLLLLSRLCLDYETSTISYILTLTDEQFLGQDHSPVTPVSSLCSLARSTAQTLLNQYVKSQGLVVSQMLRKSVETRDWVTTIEPRNVRAVMKRVVEDITGVDVQVGLLYEEGVRKAHSSDSSKRTFSVYSSSRLQGRYAQSYTPSAPMDTNLLSNIQKLFSERIDIFSTVQFNKVSILTGIIKISLKTFLECVRLRTFGRYGLQQIQVDCHYLQLYLWRFVSDENLVHCLLDEVVGSAAHRCLDPAPMEQSVIEVICERG</sequence>
<accession>Q4V9Y0</accession>
<organism>
    <name type="scientific">Xenopus tropicalis</name>
    <name type="common">Western clawed frog</name>
    <name type="synonym">Silurana tropicalis</name>
    <dbReference type="NCBI Taxonomy" id="8364"/>
    <lineage>
        <taxon>Eukaryota</taxon>
        <taxon>Metazoa</taxon>
        <taxon>Chordata</taxon>
        <taxon>Craniata</taxon>
        <taxon>Vertebrata</taxon>
        <taxon>Euteleostomi</taxon>
        <taxon>Amphibia</taxon>
        <taxon>Batrachia</taxon>
        <taxon>Anura</taxon>
        <taxon>Pipoidea</taxon>
        <taxon>Pipidae</taxon>
        <taxon>Xenopodinae</taxon>
        <taxon>Xenopus</taxon>
        <taxon>Silurana</taxon>
    </lineage>
</organism>
<gene>
    <name type="primary">vps51</name>
    <name type="synonym">ffr</name>
</gene>
<reference key="1">
    <citation type="submission" date="2005-05" db="EMBL/GenBank/DDBJ databases">
        <authorList>
            <consortium name="NIH - Xenopus Gene Collection (XGC) project"/>
        </authorList>
    </citation>
    <scope>NUCLEOTIDE SEQUENCE [LARGE SCALE MRNA]</scope>
</reference>
<comment type="function">
    <text evidence="1">Involved in retrograde transport from early and late endosomes to the late Golgi. The GARP complex is required for the maintenance of protein retrieval from endosomes to the TGN, acid hydrolase sorting, lysosome function, endosomal cholesterol traffic and autophagy. Acts as a component of the EARP complex that is involved in endocytic recycling.</text>
</comment>
<comment type="subunit">
    <text evidence="1">Component of the Golgi-associated retrograde protein (GARP) complex Component of the endosome-associated retrograde protein (EARP) complex.</text>
</comment>
<comment type="subcellular location">
    <subcellularLocation>
        <location evidence="1">Golgi apparatus</location>
        <location evidence="1">trans-Golgi network</location>
    </subcellularLocation>
    <subcellularLocation>
        <location evidence="1">Recycling endosome</location>
    </subcellularLocation>
    <text evidence="1">Localizes to the trans-Golgi network as part of the GARP complex, while it localizes to recycling endosomes as part of the EARP complex.</text>
</comment>
<comment type="similarity">
    <text evidence="3">Belongs to the VPS51 family.</text>
</comment>
<keyword id="KW-0175">Coiled coil</keyword>
<keyword id="KW-0967">Endosome</keyword>
<keyword id="KW-0333">Golgi apparatus</keyword>
<keyword id="KW-0445">Lipid transport</keyword>
<keyword id="KW-0653">Protein transport</keyword>
<keyword id="KW-1185">Reference proteome</keyword>
<keyword id="KW-0813">Transport</keyword>
<name>VPS51_XENTR</name>
<evidence type="ECO:0000250" key="1">
    <source>
        <dbReference type="UniProtKB" id="Q9UID3"/>
    </source>
</evidence>
<evidence type="ECO:0000255" key="2"/>
<evidence type="ECO:0000305" key="3"/>
<proteinExistence type="evidence at transcript level"/>